<name>SLYX_NEIM0</name>
<evidence type="ECO:0000255" key="1">
    <source>
        <dbReference type="HAMAP-Rule" id="MF_00715"/>
    </source>
</evidence>
<reference key="1">
    <citation type="journal article" date="2008" name="Genomics">
        <title>Characterization of ST-4821 complex, a unique Neisseria meningitidis clone.</title>
        <authorList>
            <person name="Peng J."/>
            <person name="Yang L."/>
            <person name="Yang F."/>
            <person name="Yang J."/>
            <person name="Yan Y."/>
            <person name="Nie H."/>
            <person name="Zhang X."/>
            <person name="Xiong Z."/>
            <person name="Jiang Y."/>
            <person name="Cheng F."/>
            <person name="Xu X."/>
            <person name="Chen S."/>
            <person name="Sun L."/>
            <person name="Li W."/>
            <person name="Shen Y."/>
            <person name="Shao Z."/>
            <person name="Liang X."/>
            <person name="Xu J."/>
            <person name="Jin Q."/>
        </authorList>
    </citation>
    <scope>NUCLEOTIDE SEQUENCE [LARGE SCALE GENOMIC DNA]</scope>
    <source>
        <strain>053442</strain>
    </source>
</reference>
<sequence length="74" mass="8649">MDAVQELERRIVELEIQSALQEDVIAGLNAMVAELRQTLDLQQAQLRLLYQKMQDRNPDAQEPYSLRDEIPPHY</sequence>
<gene>
    <name evidence="1" type="primary">slyX</name>
    <name type="ordered locus">NMCC_0123</name>
</gene>
<dbReference type="EMBL" id="CP000381">
    <property type="protein sequence ID" value="ABX72342.1"/>
    <property type="molecule type" value="Genomic_DNA"/>
</dbReference>
<dbReference type="RefSeq" id="WP_002219958.1">
    <property type="nucleotide sequence ID" value="NC_010120.1"/>
</dbReference>
<dbReference type="SMR" id="A9M081"/>
<dbReference type="KEGG" id="nmn:NMCC_0123"/>
<dbReference type="HOGENOM" id="CLU_180796_3_1_4"/>
<dbReference type="Proteomes" id="UP000001177">
    <property type="component" value="Chromosome"/>
</dbReference>
<dbReference type="Gene3D" id="1.20.5.300">
    <property type="match status" value="1"/>
</dbReference>
<dbReference type="HAMAP" id="MF_00715">
    <property type="entry name" value="SlyX"/>
    <property type="match status" value="1"/>
</dbReference>
<dbReference type="InterPro" id="IPR007236">
    <property type="entry name" value="SlyX"/>
</dbReference>
<dbReference type="NCBIfam" id="NF003316">
    <property type="entry name" value="PRK04325.1"/>
    <property type="match status" value="1"/>
</dbReference>
<dbReference type="PANTHER" id="PTHR36508">
    <property type="entry name" value="PROTEIN SLYX"/>
    <property type="match status" value="1"/>
</dbReference>
<dbReference type="PANTHER" id="PTHR36508:SF1">
    <property type="entry name" value="PROTEIN SLYX"/>
    <property type="match status" value="1"/>
</dbReference>
<dbReference type="Pfam" id="PF04102">
    <property type="entry name" value="SlyX"/>
    <property type="match status" value="1"/>
</dbReference>
<proteinExistence type="inferred from homology"/>
<feature type="chain" id="PRO_1000083241" description="Protein SlyX homolog">
    <location>
        <begin position="1"/>
        <end position="74"/>
    </location>
</feature>
<protein>
    <recommendedName>
        <fullName evidence="1">Protein SlyX homolog</fullName>
    </recommendedName>
</protein>
<accession>A9M081</accession>
<comment type="similarity">
    <text evidence="1">Belongs to the SlyX family.</text>
</comment>
<organism>
    <name type="scientific">Neisseria meningitidis serogroup C (strain 053442)</name>
    <dbReference type="NCBI Taxonomy" id="374833"/>
    <lineage>
        <taxon>Bacteria</taxon>
        <taxon>Pseudomonadati</taxon>
        <taxon>Pseudomonadota</taxon>
        <taxon>Betaproteobacteria</taxon>
        <taxon>Neisseriales</taxon>
        <taxon>Neisseriaceae</taxon>
        <taxon>Neisseria</taxon>
    </lineage>
</organism>